<organism>
    <name type="scientific">Streptococcus pyogenes serotype M1</name>
    <dbReference type="NCBI Taxonomy" id="301447"/>
    <lineage>
        <taxon>Bacteria</taxon>
        <taxon>Bacillati</taxon>
        <taxon>Bacillota</taxon>
        <taxon>Bacilli</taxon>
        <taxon>Lactobacillales</taxon>
        <taxon>Streptococcaceae</taxon>
        <taxon>Streptococcus</taxon>
    </lineage>
</organism>
<feature type="chain" id="PRO_0000134589" description="Orotidine 5'-phosphate decarboxylase">
    <location>
        <begin position="1"/>
        <end position="230"/>
    </location>
</feature>
<feature type="active site" description="Proton donor" evidence="1">
    <location>
        <position position="63"/>
    </location>
</feature>
<feature type="binding site" evidence="1">
    <location>
        <position position="11"/>
    </location>
    <ligand>
        <name>substrate</name>
    </ligand>
</feature>
<feature type="binding site" evidence="1">
    <location>
        <position position="34"/>
    </location>
    <ligand>
        <name>substrate</name>
    </ligand>
</feature>
<feature type="binding site" evidence="1">
    <location>
        <begin position="61"/>
        <end position="70"/>
    </location>
    <ligand>
        <name>substrate</name>
    </ligand>
</feature>
<feature type="binding site" evidence="1">
    <location>
        <position position="117"/>
    </location>
    <ligand>
        <name>substrate</name>
    </ligand>
</feature>
<feature type="binding site" evidence="1">
    <location>
        <position position="179"/>
    </location>
    <ligand>
        <name>substrate</name>
    </ligand>
</feature>
<feature type="binding site" evidence="1">
    <location>
        <position position="188"/>
    </location>
    <ligand>
        <name>substrate</name>
    </ligand>
</feature>
<feature type="binding site" evidence="1">
    <location>
        <position position="208"/>
    </location>
    <ligand>
        <name>substrate</name>
    </ligand>
</feature>
<feature type="binding site" evidence="1">
    <location>
        <position position="209"/>
    </location>
    <ligand>
        <name>substrate</name>
    </ligand>
</feature>
<feature type="sequence conflict" description="In Ref. 2; AAZ51321." evidence="2" ref="2">
    <original>A</original>
    <variation>V</variation>
    <location>
        <position position="42"/>
    </location>
</feature>
<dbReference type="EC" id="4.1.1.23" evidence="1"/>
<dbReference type="EMBL" id="AE004092">
    <property type="protein sequence ID" value="AAK33817.1"/>
    <property type="molecule type" value="Genomic_DNA"/>
</dbReference>
<dbReference type="EMBL" id="CP000017">
    <property type="protein sequence ID" value="AAZ51321.1"/>
    <property type="molecule type" value="Genomic_DNA"/>
</dbReference>
<dbReference type="RefSeq" id="NP_269096.1">
    <property type="nucleotide sequence ID" value="NC_002737.2"/>
</dbReference>
<dbReference type="SMR" id="Q9A077"/>
<dbReference type="PaxDb" id="1314-HKU360_00713"/>
<dbReference type="KEGG" id="spy:SPy_0900"/>
<dbReference type="KEGG" id="spz:M5005_Spy0703"/>
<dbReference type="PATRIC" id="fig|160490.10.peg.773"/>
<dbReference type="HOGENOM" id="CLU_067069_1_1_9"/>
<dbReference type="OMA" id="FWKVGLE"/>
<dbReference type="UniPathway" id="UPA00070">
    <property type="reaction ID" value="UER00120"/>
</dbReference>
<dbReference type="Proteomes" id="UP000000750">
    <property type="component" value="Chromosome"/>
</dbReference>
<dbReference type="GO" id="GO:0005829">
    <property type="term" value="C:cytosol"/>
    <property type="evidence" value="ECO:0007669"/>
    <property type="project" value="TreeGrafter"/>
</dbReference>
<dbReference type="GO" id="GO:0004590">
    <property type="term" value="F:orotidine-5'-phosphate decarboxylase activity"/>
    <property type="evidence" value="ECO:0007669"/>
    <property type="project" value="UniProtKB-UniRule"/>
</dbReference>
<dbReference type="GO" id="GO:0006207">
    <property type="term" value="P:'de novo' pyrimidine nucleobase biosynthetic process"/>
    <property type="evidence" value="ECO:0007669"/>
    <property type="project" value="InterPro"/>
</dbReference>
<dbReference type="GO" id="GO:0044205">
    <property type="term" value="P:'de novo' UMP biosynthetic process"/>
    <property type="evidence" value="ECO:0007669"/>
    <property type="project" value="UniProtKB-UniRule"/>
</dbReference>
<dbReference type="CDD" id="cd04725">
    <property type="entry name" value="OMP_decarboxylase_like"/>
    <property type="match status" value="1"/>
</dbReference>
<dbReference type="FunFam" id="3.20.20.70:FF:000015">
    <property type="entry name" value="Orotidine 5'-phosphate decarboxylase"/>
    <property type="match status" value="1"/>
</dbReference>
<dbReference type="Gene3D" id="3.20.20.70">
    <property type="entry name" value="Aldolase class I"/>
    <property type="match status" value="1"/>
</dbReference>
<dbReference type="HAMAP" id="MF_01200_B">
    <property type="entry name" value="OMPdecase_type1_B"/>
    <property type="match status" value="1"/>
</dbReference>
<dbReference type="InterPro" id="IPR013785">
    <property type="entry name" value="Aldolase_TIM"/>
</dbReference>
<dbReference type="InterPro" id="IPR014732">
    <property type="entry name" value="OMPdecase"/>
</dbReference>
<dbReference type="InterPro" id="IPR018089">
    <property type="entry name" value="OMPdecase_AS"/>
</dbReference>
<dbReference type="InterPro" id="IPR047596">
    <property type="entry name" value="OMPdecase_bac"/>
</dbReference>
<dbReference type="InterPro" id="IPR001754">
    <property type="entry name" value="OMPdeCOase_dom"/>
</dbReference>
<dbReference type="InterPro" id="IPR011060">
    <property type="entry name" value="RibuloseP-bd_barrel"/>
</dbReference>
<dbReference type="NCBIfam" id="NF001273">
    <property type="entry name" value="PRK00230.1"/>
    <property type="match status" value="1"/>
</dbReference>
<dbReference type="NCBIfam" id="TIGR01740">
    <property type="entry name" value="pyrF"/>
    <property type="match status" value="1"/>
</dbReference>
<dbReference type="PANTHER" id="PTHR32119">
    <property type="entry name" value="OROTIDINE 5'-PHOSPHATE DECARBOXYLASE"/>
    <property type="match status" value="1"/>
</dbReference>
<dbReference type="PANTHER" id="PTHR32119:SF2">
    <property type="entry name" value="OROTIDINE 5'-PHOSPHATE DECARBOXYLASE"/>
    <property type="match status" value="1"/>
</dbReference>
<dbReference type="Pfam" id="PF00215">
    <property type="entry name" value="OMPdecase"/>
    <property type="match status" value="1"/>
</dbReference>
<dbReference type="SMART" id="SM00934">
    <property type="entry name" value="OMPdecase"/>
    <property type="match status" value="1"/>
</dbReference>
<dbReference type="SUPFAM" id="SSF51366">
    <property type="entry name" value="Ribulose-phoshate binding barrel"/>
    <property type="match status" value="1"/>
</dbReference>
<dbReference type="PROSITE" id="PS00156">
    <property type="entry name" value="OMPDECASE"/>
    <property type="match status" value="1"/>
</dbReference>
<comment type="function">
    <text evidence="1">Catalyzes the decarboxylation of orotidine 5'-monophosphate (OMP) to uridine 5'-monophosphate (UMP).</text>
</comment>
<comment type="catalytic activity">
    <reaction evidence="1">
        <text>orotidine 5'-phosphate + H(+) = UMP + CO2</text>
        <dbReference type="Rhea" id="RHEA:11596"/>
        <dbReference type="ChEBI" id="CHEBI:15378"/>
        <dbReference type="ChEBI" id="CHEBI:16526"/>
        <dbReference type="ChEBI" id="CHEBI:57538"/>
        <dbReference type="ChEBI" id="CHEBI:57865"/>
        <dbReference type="EC" id="4.1.1.23"/>
    </reaction>
</comment>
<comment type="pathway">
    <text evidence="1">Pyrimidine metabolism; UMP biosynthesis via de novo pathway; UMP from orotate: step 2/2.</text>
</comment>
<comment type="subunit">
    <text evidence="1">Homodimer.</text>
</comment>
<comment type="similarity">
    <text evidence="1">Belongs to the OMP decarboxylase family. Type 1 subfamily.</text>
</comment>
<gene>
    <name evidence="1" type="primary">pyrF</name>
    <name type="ordered locus">SPy_0900</name>
    <name type="ordered locus">M5005_Spy0703</name>
</gene>
<evidence type="ECO:0000255" key="1">
    <source>
        <dbReference type="HAMAP-Rule" id="MF_01200"/>
    </source>
</evidence>
<evidence type="ECO:0000305" key="2"/>
<proteinExistence type="inferred from homology"/>
<keyword id="KW-0210">Decarboxylase</keyword>
<keyword id="KW-0456">Lyase</keyword>
<keyword id="KW-0665">Pyrimidine biosynthesis</keyword>
<keyword id="KW-1185">Reference proteome</keyword>
<sequence>MKEERPIIALDFSSFEETKAFLDLFPAEEKLYVKIGMELYYAQGPDIVRYIKSLGHNVFLDLKLHDIPNTVRAAMAVLKELDIDMATVHAAGGVEMLKAAREGLGQGPTLIAVTQLTSTSEDQMRGDQNIQTSLLESVLHYSKGAAKAQLDGAVCSAQEVEAIKAVTPTGFTCLTPGIRPKGSNIGDQKRVMTPNQARRIGSDYIVVGRPITQAKDPVAAYQAIKAEWAG</sequence>
<accession>Q9A077</accession>
<accession>Q48Z97</accession>
<reference key="1">
    <citation type="journal article" date="2001" name="Proc. Natl. Acad. Sci. U.S.A.">
        <title>Complete genome sequence of an M1 strain of Streptococcus pyogenes.</title>
        <authorList>
            <person name="Ferretti J.J."/>
            <person name="McShan W.M."/>
            <person name="Ajdic D.J."/>
            <person name="Savic D.J."/>
            <person name="Savic G."/>
            <person name="Lyon K."/>
            <person name="Primeaux C."/>
            <person name="Sezate S."/>
            <person name="Suvorov A.N."/>
            <person name="Kenton S."/>
            <person name="Lai H.S."/>
            <person name="Lin S.P."/>
            <person name="Qian Y."/>
            <person name="Jia H.G."/>
            <person name="Najar F.Z."/>
            <person name="Ren Q."/>
            <person name="Zhu H."/>
            <person name="Song L."/>
            <person name="White J."/>
            <person name="Yuan X."/>
            <person name="Clifton S.W."/>
            <person name="Roe B.A."/>
            <person name="McLaughlin R.E."/>
        </authorList>
    </citation>
    <scope>NUCLEOTIDE SEQUENCE [LARGE SCALE GENOMIC DNA]</scope>
    <source>
        <strain>ATCC 700294 / SF370 / Serotype M1</strain>
    </source>
</reference>
<reference key="2">
    <citation type="journal article" date="2005" name="J. Infect. Dis.">
        <title>Evolutionary origin and emergence of a highly successful clone of serotype M1 group A Streptococcus involved multiple horizontal gene transfer events.</title>
        <authorList>
            <person name="Sumby P."/>
            <person name="Porcella S.F."/>
            <person name="Madrigal A.G."/>
            <person name="Barbian K.D."/>
            <person name="Virtaneva K."/>
            <person name="Ricklefs S.M."/>
            <person name="Sturdevant D.E."/>
            <person name="Graham M.R."/>
            <person name="Vuopio-Varkila J."/>
            <person name="Hoe N.P."/>
            <person name="Musser J.M."/>
        </authorList>
    </citation>
    <scope>NUCLEOTIDE SEQUENCE [LARGE SCALE GENOMIC DNA]</scope>
    <source>
        <strain>ATCC BAA-947 / MGAS5005 / Serotype M1</strain>
    </source>
</reference>
<name>PYRF_STRP1</name>
<protein>
    <recommendedName>
        <fullName evidence="1">Orotidine 5'-phosphate decarboxylase</fullName>
        <ecNumber evidence="1">4.1.1.23</ecNumber>
    </recommendedName>
    <alternativeName>
        <fullName evidence="1">OMP decarboxylase</fullName>
        <shortName evidence="1">OMPDCase</shortName>
        <shortName evidence="1">OMPdecase</shortName>
    </alternativeName>
</protein>